<name>RF2_CHLPN</name>
<proteinExistence type="inferred from homology"/>
<keyword id="KW-0963">Cytoplasm</keyword>
<keyword id="KW-0488">Methylation</keyword>
<keyword id="KW-0648">Protein biosynthesis</keyword>
<keyword id="KW-0688">Ribosomal frameshifting</keyword>
<protein>
    <recommendedName>
        <fullName>Peptide chain release factor 2</fullName>
        <shortName>RF-2</shortName>
    </recommendedName>
</protein>
<accession>P56906</accession>
<accession>Q9JSD6</accession>
<accession>Q9JSD7</accession>
<gene>
    <name type="primary">prfB</name>
    <name type="ordered locus">CPn_0576</name>
    <name type="ordered locus">CP_0173</name>
    <name type="ordered locus">CPj0576</name>
    <name type="ordered locus">CpB0598</name>
</gene>
<evidence type="ECO:0000250" key="1"/>
<evidence type="ECO:0000305" key="2"/>
<dbReference type="EMBL" id="AE001363">
    <property type="status" value="NOT_ANNOTATED_CDS"/>
    <property type="molecule type" value="Genomic_DNA"/>
</dbReference>
<dbReference type="EMBL" id="AE002161">
    <property type="status" value="NOT_ANNOTATED_CDS"/>
    <property type="molecule type" value="Genomic_DNA"/>
</dbReference>
<dbReference type="EMBL" id="BA000008">
    <property type="protein sequence ID" value="BAA98782.1"/>
    <property type="status" value="ALT_SEQ"/>
    <property type="molecule type" value="Genomic_DNA"/>
</dbReference>
<dbReference type="EMBL" id="BA000008">
    <property type="protein sequence ID" value="BAA98783.1"/>
    <property type="status" value="ALT_SEQ"/>
    <property type="molecule type" value="Genomic_DNA"/>
</dbReference>
<dbReference type="EMBL" id="AE009440">
    <property type="protein sequence ID" value="AAP98527.1"/>
    <property type="status" value="ALT_SEQ"/>
    <property type="molecule type" value="Genomic_DNA"/>
</dbReference>
<dbReference type="PIR" id="D86562">
    <property type="entry name" value="D86562"/>
</dbReference>
<dbReference type="PIR" id="E86562">
    <property type="entry name" value="E86562"/>
</dbReference>
<dbReference type="RefSeq" id="WP_010883214.1">
    <property type="nucleotide sequence ID" value="NZ_LN847257.1"/>
</dbReference>
<dbReference type="SMR" id="P56906"/>
<dbReference type="GeneID" id="45050620"/>
<dbReference type="KEGG" id="cpj:CPj0576_1"/>
<dbReference type="KEGG" id="cpj:CPj0576_2"/>
<dbReference type="KEGG" id="cpt:CpB0598"/>
<dbReference type="eggNOG" id="COG1186">
    <property type="taxonomic scope" value="Bacteria"/>
</dbReference>
<dbReference type="HOGENOM" id="CLU_036856_6_0_0"/>
<dbReference type="OrthoDB" id="9806673at2"/>
<dbReference type="Proteomes" id="UP000000583">
    <property type="component" value="Chromosome"/>
</dbReference>
<dbReference type="Proteomes" id="UP000000801">
    <property type="component" value="Chromosome"/>
</dbReference>
<dbReference type="GO" id="GO:0005737">
    <property type="term" value="C:cytoplasm"/>
    <property type="evidence" value="ECO:0007669"/>
    <property type="project" value="UniProtKB-SubCell"/>
</dbReference>
<dbReference type="GO" id="GO:0016149">
    <property type="term" value="F:translation release factor activity, codon specific"/>
    <property type="evidence" value="ECO:0007669"/>
    <property type="project" value="UniProtKB-UniRule"/>
</dbReference>
<dbReference type="GO" id="GO:0075523">
    <property type="term" value="P:viral translational frameshifting"/>
    <property type="evidence" value="ECO:0007669"/>
    <property type="project" value="UniProtKB-KW"/>
</dbReference>
<dbReference type="FunFam" id="3.30.160.20:FF:000004">
    <property type="entry name" value="Peptide chain release factor 1"/>
    <property type="match status" value="1"/>
</dbReference>
<dbReference type="Gene3D" id="3.30.160.20">
    <property type="match status" value="1"/>
</dbReference>
<dbReference type="Gene3D" id="3.30.70.1660">
    <property type="match status" value="1"/>
</dbReference>
<dbReference type="Gene3D" id="1.20.58.410">
    <property type="entry name" value="Release factor"/>
    <property type="match status" value="1"/>
</dbReference>
<dbReference type="HAMAP" id="MF_00094">
    <property type="entry name" value="Rel_fac_2"/>
    <property type="match status" value="1"/>
</dbReference>
<dbReference type="InterPro" id="IPR005139">
    <property type="entry name" value="PCRF"/>
</dbReference>
<dbReference type="InterPro" id="IPR000352">
    <property type="entry name" value="Pep_chain_release_fac_I"/>
</dbReference>
<dbReference type="InterPro" id="IPR045853">
    <property type="entry name" value="Pep_chain_release_fac_I_sf"/>
</dbReference>
<dbReference type="InterPro" id="IPR004374">
    <property type="entry name" value="PrfB"/>
</dbReference>
<dbReference type="NCBIfam" id="TIGR00020">
    <property type="entry name" value="prfB"/>
    <property type="match status" value="1"/>
</dbReference>
<dbReference type="PANTHER" id="PTHR43116:SF3">
    <property type="entry name" value="CLASS I PEPTIDE CHAIN RELEASE FACTOR"/>
    <property type="match status" value="1"/>
</dbReference>
<dbReference type="PANTHER" id="PTHR43116">
    <property type="entry name" value="PEPTIDE CHAIN RELEASE FACTOR 2"/>
    <property type="match status" value="1"/>
</dbReference>
<dbReference type="Pfam" id="PF03462">
    <property type="entry name" value="PCRF"/>
    <property type="match status" value="1"/>
</dbReference>
<dbReference type="Pfam" id="PF00472">
    <property type="entry name" value="RF-1"/>
    <property type="match status" value="1"/>
</dbReference>
<dbReference type="SMART" id="SM00937">
    <property type="entry name" value="PCRF"/>
    <property type="match status" value="1"/>
</dbReference>
<dbReference type="SUPFAM" id="SSF75620">
    <property type="entry name" value="Release factor"/>
    <property type="match status" value="1"/>
</dbReference>
<dbReference type="PROSITE" id="PS00745">
    <property type="entry name" value="RF_PROK_I"/>
    <property type="match status" value="1"/>
</dbReference>
<reference key="1">
    <citation type="journal article" date="1999" name="Nat. Genet.">
        <title>Comparative genomes of Chlamydia pneumoniae and C. trachomatis.</title>
        <authorList>
            <person name="Kalman S."/>
            <person name="Mitchell W.P."/>
            <person name="Marathe R."/>
            <person name="Lammel C.J."/>
            <person name="Fan J."/>
            <person name="Hyman R.W."/>
            <person name="Olinger L."/>
            <person name="Grimwood J."/>
            <person name="Davis R.W."/>
            <person name="Stephens R.S."/>
        </authorList>
    </citation>
    <scope>NUCLEOTIDE SEQUENCE [LARGE SCALE GENOMIC DNA]</scope>
    <source>
        <strain>CWL029</strain>
    </source>
</reference>
<reference key="2">
    <citation type="journal article" date="2000" name="Nucleic Acids Res.">
        <title>Genome sequences of Chlamydia trachomatis MoPn and Chlamydia pneumoniae AR39.</title>
        <authorList>
            <person name="Read T.D."/>
            <person name="Brunham R.C."/>
            <person name="Shen C."/>
            <person name="Gill S.R."/>
            <person name="Heidelberg J.F."/>
            <person name="White O."/>
            <person name="Hickey E.K."/>
            <person name="Peterson J.D."/>
            <person name="Utterback T.R."/>
            <person name="Berry K.J."/>
            <person name="Bass S."/>
            <person name="Linher K.D."/>
            <person name="Weidman J.F."/>
            <person name="Khouri H.M."/>
            <person name="Craven B."/>
            <person name="Bowman C."/>
            <person name="Dodson R.J."/>
            <person name="Gwinn M.L."/>
            <person name="Nelson W.C."/>
            <person name="DeBoy R.T."/>
            <person name="Kolonay J.F."/>
            <person name="McClarty G."/>
            <person name="Salzberg S.L."/>
            <person name="Eisen J.A."/>
            <person name="Fraser C.M."/>
        </authorList>
    </citation>
    <scope>NUCLEOTIDE SEQUENCE [LARGE SCALE GENOMIC DNA]</scope>
    <source>
        <strain>AR39</strain>
    </source>
</reference>
<reference key="3">
    <citation type="journal article" date="2000" name="Nucleic Acids Res.">
        <title>Comparison of whole genome sequences of Chlamydia pneumoniae J138 from Japan and CWL029 from USA.</title>
        <authorList>
            <person name="Shirai M."/>
            <person name="Hirakawa H."/>
            <person name="Kimoto M."/>
            <person name="Tabuchi M."/>
            <person name="Kishi F."/>
            <person name="Ouchi K."/>
            <person name="Shiba T."/>
            <person name="Ishii K."/>
            <person name="Hattori M."/>
            <person name="Kuhara S."/>
            <person name="Nakazawa T."/>
        </authorList>
    </citation>
    <scope>NUCLEOTIDE SEQUENCE [LARGE SCALE GENOMIC DNA]</scope>
    <source>
        <strain>J138</strain>
    </source>
</reference>
<reference key="4">
    <citation type="submission" date="2002-05" db="EMBL/GenBank/DDBJ databases">
        <title>The genome sequence of Chlamydia pneumoniae TW183 and comparison with other Chlamydia strains based on whole genome sequence analysis.</title>
        <authorList>
            <person name="Geng M.M."/>
            <person name="Schuhmacher A."/>
            <person name="Muehldorfer I."/>
            <person name="Bensch K.W."/>
            <person name="Schaefer K.P."/>
            <person name="Schneider S."/>
            <person name="Pohl T."/>
            <person name="Essig A."/>
            <person name="Marre R."/>
            <person name="Melchers K."/>
        </authorList>
    </citation>
    <scope>NUCLEOTIDE SEQUENCE [LARGE SCALE GENOMIC DNA]</scope>
    <source>
        <strain>TW-183</strain>
    </source>
</reference>
<sequence>MQENLDKRLEALRTEISLAARSLFDLDKKQKELQVLEEESSEENFWQDSVHAGKISEQIVSLRRQIQEYQELKSKIDAIEFFLEDADALEDPAICEDLEKEFLFCEKKLAVWETQRLLSGEADKNSCFLTINAGAGGTESCDWVEMLFRMYSRWATKHQWALEVVDRLDGEVVGIKHVTVKFSGMYAYGYAKAERGVHRLVRISPFDSNGKRHTSFASVDVFPEIDDQIKIEIRPNDLRIDTFRSSGAGGQHVNVTESAVRITHLPSGVVVSCQNERSQIQNRESCMKMLQAKLYQQVLQERLEKQSLDRKDKKEIAWGSQIRNYVFQPYTLVKDVRTGHETGNVQAMLDGELLDEFIKAYLAEFGEVS</sequence>
<organism>
    <name type="scientific">Chlamydia pneumoniae</name>
    <name type="common">Chlamydophila pneumoniae</name>
    <dbReference type="NCBI Taxonomy" id="83558"/>
    <lineage>
        <taxon>Bacteria</taxon>
        <taxon>Pseudomonadati</taxon>
        <taxon>Chlamydiota</taxon>
        <taxon>Chlamydiia</taxon>
        <taxon>Chlamydiales</taxon>
        <taxon>Chlamydiaceae</taxon>
        <taxon>Chlamydia/Chlamydophila group</taxon>
        <taxon>Chlamydia</taxon>
    </lineage>
</organism>
<comment type="function">
    <text evidence="1">Peptide chain release factor 2 directs the termination of translation in response to the peptide chain termination codons UGA and UAA.</text>
</comment>
<comment type="subcellular location">
    <subcellularLocation>
        <location evidence="1">Cytoplasm</location>
    </subcellularLocation>
</comment>
<comment type="PTM">
    <text evidence="1">Methylated by PrmC. Methylation increases the termination efficiency of RF2 (By similarity).</text>
</comment>
<comment type="miscellaneous">
    <text evidence="1">The gene for this protein contains a UGA in-frame termination codon after Leu-23; a naturally occurring frameshift enables complete translation of RF-2. This provides a mechanism for the protein to regulate its own production (By similarity).</text>
</comment>
<comment type="similarity">
    <text evidence="2">Belongs to the prokaryotic/mitochondrial release factor family.</text>
</comment>
<feature type="chain" id="PRO_0000166812" description="Peptide chain release factor 2">
    <location>
        <begin position="1"/>
        <end position="369"/>
    </location>
</feature>
<feature type="modified residue" description="N5-methylglutamine" evidence="1">
    <location>
        <position position="251"/>
    </location>
</feature>